<feature type="chain" id="PRO_1000164144" description="Phosphatidylglycerol--prolipoprotein diacylglyceryl transferase">
    <location>
        <begin position="1"/>
        <end position="330"/>
    </location>
</feature>
<feature type="transmembrane region" description="Helical" evidence="1">
    <location>
        <begin position="22"/>
        <end position="42"/>
    </location>
</feature>
<feature type="transmembrane region" description="Helical" evidence="1">
    <location>
        <begin position="57"/>
        <end position="77"/>
    </location>
</feature>
<feature type="transmembrane region" description="Helical" evidence="1">
    <location>
        <begin position="97"/>
        <end position="117"/>
    </location>
</feature>
<feature type="transmembrane region" description="Helical" evidence="1">
    <location>
        <begin position="193"/>
        <end position="213"/>
    </location>
</feature>
<feature type="transmembrane region" description="Helical" evidence="1">
    <location>
        <begin position="257"/>
        <end position="277"/>
    </location>
</feature>
<feature type="binding site" evidence="1">
    <location>
        <position position="145"/>
    </location>
    <ligand>
        <name>a 1,2-diacyl-sn-glycero-3-phospho-(1'-sn-glycerol)</name>
        <dbReference type="ChEBI" id="CHEBI:64716"/>
    </ligand>
</feature>
<evidence type="ECO:0000255" key="1">
    <source>
        <dbReference type="HAMAP-Rule" id="MF_01147"/>
    </source>
</evidence>
<protein>
    <recommendedName>
        <fullName evidence="1">Phosphatidylglycerol--prolipoprotein diacylglyceryl transferase</fullName>
        <ecNumber evidence="1">2.5.1.145</ecNumber>
    </recommendedName>
</protein>
<dbReference type="EC" id="2.5.1.145" evidence="1"/>
<dbReference type="EMBL" id="FM211192">
    <property type="protein sequence ID" value="CAR71369.1"/>
    <property type="molecule type" value="Genomic_DNA"/>
</dbReference>
<dbReference type="SMR" id="B8ZRC2"/>
<dbReference type="KEGG" id="mlb:MLBr01274"/>
<dbReference type="HOGENOM" id="CLU_013386_2_0_11"/>
<dbReference type="UniPathway" id="UPA00664"/>
<dbReference type="Proteomes" id="UP000006900">
    <property type="component" value="Chromosome"/>
</dbReference>
<dbReference type="GO" id="GO:0005886">
    <property type="term" value="C:plasma membrane"/>
    <property type="evidence" value="ECO:0007669"/>
    <property type="project" value="UniProtKB-SubCell"/>
</dbReference>
<dbReference type="GO" id="GO:0008961">
    <property type="term" value="F:phosphatidylglycerol-prolipoprotein diacylglyceryl transferase activity"/>
    <property type="evidence" value="ECO:0007669"/>
    <property type="project" value="UniProtKB-UniRule"/>
</dbReference>
<dbReference type="GO" id="GO:0042158">
    <property type="term" value="P:lipoprotein biosynthetic process"/>
    <property type="evidence" value="ECO:0007669"/>
    <property type="project" value="UniProtKB-UniRule"/>
</dbReference>
<dbReference type="HAMAP" id="MF_01147">
    <property type="entry name" value="Lgt"/>
    <property type="match status" value="1"/>
</dbReference>
<dbReference type="InterPro" id="IPR001640">
    <property type="entry name" value="Lgt"/>
</dbReference>
<dbReference type="NCBIfam" id="TIGR00544">
    <property type="entry name" value="lgt"/>
    <property type="match status" value="1"/>
</dbReference>
<dbReference type="PANTHER" id="PTHR30589:SF0">
    <property type="entry name" value="PHOSPHATIDYLGLYCEROL--PROLIPOPROTEIN DIACYLGLYCERYL TRANSFERASE"/>
    <property type="match status" value="1"/>
</dbReference>
<dbReference type="PANTHER" id="PTHR30589">
    <property type="entry name" value="PROLIPOPROTEIN DIACYLGLYCERYL TRANSFERASE"/>
    <property type="match status" value="1"/>
</dbReference>
<dbReference type="Pfam" id="PF01790">
    <property type="entry name" value="LGT"/>
    <property type="match status" value="1"/>
</dbReference>
<dbReference type="PROSITE" id="PS01311">
    <property type="entry name" value="LGT"/>
    <property type="match status" value="1"/>
</dbReference>
<proteinExistence type="inferred from homology"/>
<accession>B8ZRC2</accession>
<gene>
    <name evidence="1" type="primary">lgt</name>
    <name type="ordered locus">MLBr01274</name>
</gene>
<reference key="1">
    <citation type="journal article" date="2009" name="Nat. Genet.">
        <title>Comparative genomic and phylogeographic analysis of Mycobacterium leprae.</title>
        <authorList>
            <person name="Monot M."/>
            <person name="Honore N."/>
            <person name="Garnier T."/>
            <person name="Zidane N."/>
            <person name="Sherafi D."/>
            <person name="Paniz-Mondolfi A."/>
            <person name="Matsuoka M."/>
            <person name="Taylor G.M."/>
            <person name="Donoghue H.D."/>
            <person name="Bouwman A."/>
            <person name="Mays S."/>
            <person name="Watson C."/>
            <person name="Lockwood D."/>
            <person name="Khamispour A."/>
            <person name="Dowlati Y."/>
            <person name="Jianping S."/>
            <person name="Rea T.H."/>
            <person name="Vera-Cabrera L."/>
            <person name="Stefani M.M."/>
            <person name="Banu S."/>
            <person name="Macdonald M."/>
            <person name="Sapkota B.R."/>
            <person name="Spencer J.S."/>
            <person name="Thomas J."/>
            <person name="Harshman K."/>
            <person name="Singh P."/>
            <person name="Busso P."/>
            <person name="Gattiker A."/>
            <person name="Rougemont J."/>
            <person name="Brennan P.J."/>
            <person name="Cole S.T."/>
        </authorList>
    </citation>
    <scope>NUCLEOTIDE SEQUENCE [LARGE SCALE GENOMIC DNA]</scope>
    <source>
        <strain>Br4923</strain>
    </source>
</reference>
<comment type="function">
    <text evidence="1">Catalyzes the transfer of the diacylglyceryl group from phosphatidylglycerol to the sulfhydryl group of the N-terminal cysteine of a prolipoprotein, the first step in the formation of mature lipoproteins.</text>
</comment>
<comment type="catalytic activity">
    <reaction evidence="1">
        <text>L-cysteinyl-[prolipoprotein] + a 1,2-diacyl-sn-glycero-3-phospho-(1'-sn-glycerol) = an S-1,2-diacyl-sn-glyceryl-L-cysteinyl-[prolipoprotein] + sn-glycerol 1-phosphate + H(+)</text>
        <dbReference type="Rhea" id="RHEA:56712"/>
        <dbReference type="Rhea" id="RHEA-COMP:14679"/>
        <dbReference type="Rhea" id="RHEA-COMP:14680"/>
        <dbReference type="ChEBI" id="CHEBI:15378"/>
        <dbReference type="ChEBI" id="CHEBI:29950"/>
        <dbReference type="ChEBI" id="CHEBI:57685"/>
        <dbReference type="ChEBI" id="CHEBI:64716"/>
        <dbReference type="ChEBI" id="CHEBI:140658"/>
        <dbReference type="EC" id="2.5.1.145"/>
    </reaction>
</comment>
<comment type="pathway">
    <text evidence="1">Protein modification; lipoprotein biosynthesis (diacylglyceryl transfer).</text>
</comment>
<comment type="subcellular location">
    <subcellularLocation>
        <location evidence="1">Cell membrane</location>
        <topology evidence="1">Multi-pass membrane protein</topology>
    </subcellularLocation>
</comment>
<comment type="similarity">
    <text evidence="1">Belongs to the Lgt family.</text>
</comment>
<sequence>MTRMLPGYFPSPPRGVWHLGPLPIRAYALLIILGIVAALVVGGRCWEARGGERDVTYDIALWAVPFGLVGGRLYHLATDWRTYFGQNGAGLGAALRIWDGGLGIWGAVALGCVGAWLGCRRHRIPLPAFGDALAPGIILAQAIGRLGNYFNQELYGRETTMPWGLEVFYRRDPAGYMDPHSLDGVSTGQLAFVVQPTFLYELIWNVLVFFALIYVDRWFTLGHGRLFATYVAAYCIGRFCVELLRDDAATHIAGIRINSFTSTFVFIGAVVYIILAPKGREEPENLCRAEYVAREIPEPESATERATVASTYATTTAVPVSADEEFAETN</sequence>
<organism>
    <name type="scientific">Mycobacterium leprae (strain Br4923)</name>
    <dbReference type="NCBI Taxonomy" id="561304"/>
    <lineage>
        <taxon>Bacteria</taxon>
        <taxon>Bacillati</taxon>
        <taxon>Actinomycetota</taxon>
        <taxon>Actinomycetes</taxon>
        <taxon>Mycobacteriales</taxon>
        <taxon>Mycobacteriaceae</taxon>
        <taxon>Mycobacterium</taxon>
    </lineage>
</organism>
<keyword id="KW-1003">Cell membrane</keyword>
<keyword id="KW-0472">Membrane</keyword>
<keyword id="KW-0808">Transferase</keyword>
<keyword id="KW-0812">Transmembrane</keyword>
<keyword id="KW-1133">Transmembrane helix</keyword>
<name>LGT_MYCLB</name>